<dbReference type="EC" id="7.4.2.8" evidence="1"/>
<dbReference type="EMBL" id="AP008229">
    <property type="protein sequence ID" value="BAE70350.1"/>
    <property type="molecule type" value="Genomic_DNA"/>
</dbReference>
<dbReference type="RefSeq" id="WP_011260222.1">
    <property type="nucleotide sequence ID" value="NC_007705.1"/>
</dbReference>
<dbReference type="SMR" id="Q2NZC7"/>
<dbReference type="KEGG" id="xom:XOO3595"/>
<dbReference type="HOGENOM" id="CLU_005314_3_0_6"/>
<dbReference type="GO" id="GO:0031522">
    <property type="term" value="C:cell envelope Sec protein transport complex"/>
    <property type="evidence" value="ECO:0007669"/>
    <property type="project" value="TreeGrafter"/>
</dbReference>
<dbReference type="GO" id="GO:0005829">
    <property type="term" value="C:cytosol"/>
    <property type="evidence" value="ECO:0007669"/>
    <property type="project" value="TreeGrafter"/>
</dbReference>
<dbReference type="GO" id="GO:0005886">
    <property type="term" value="C:plasma membrane"/>
    <property type="evidence" value="ECO:0007669"/>
    <property type="project" value="UniProtKB-SubCell"/>
</dbReference>
<dbReference type="GO" id="GO:0005524">
    <property type="term" value="F:ATP binding"/>
    <property type="evidence" value="ECO:0007669"/>
    <property type="project" value="UniProtKB-UniRule"/>
</dbReference>
<dbReference type="GO" id="GO:0046872">
    <property type="term" value="F:metal ion binding"/>
    <property type="evidence" value="ECO:0007669"/>
    <property type="project" value="UniProtKB-KW"/>
</dbReference>
<dbReference type="GO" id="GO:0008564">
    <property type="term" value="F:protein-exporting ATPase activity"/>
    <property type="evidence" value="ECO:0007669"/>
    <property type="project" value="UniProtKB-EC"/>
</dbReference>
<dbReference type="GO" id="GO:0065002">
    <property type="term" value="P:intracellular protein transmembrane transport"/>
    <property type="evidence" value="ECO:0007669"/>
    <property type="project" value="UniProtKB-UniRule"/>
</dbReference>
<dbReference type="GO" id="GO:0017038">
    <property type="term" value="P:protein import"/>
    <property type="evidence" value="ECO:0007669"/>
    <property type="project" value="InterPro"/>
</dbReference>
<dbReference type="GO" id="GO:0006605">
    <property type="term" value="P:protein targeting"/>
    <property type="evidence" value="ECO:0007669"/>
    <property type="project" value="UniProtKB-UniRule"/>
</dbReference>
<dbReference type="GO" id="GO:0043952">
    <property type="term" value="P:protein transport by the Sec complex"/>
    <property type="evidence" value="ECO:0007669"/>
    <property type="project" value="TreeGrafter"/>
</dbReference>
<dbReference type="CDD" id="cd17928">
    <property type="entry name" value="DEXDc_SecA"/>
    <property type="match status" value="1"/>
</dbReference>
<dbReference type="CDD" id="cd18803">
    <property type="entry name" value="SF2_C_secA"/>
    <property type="match status" value="1"/>
</dbReference>
<dbReference type="FunFam" id="3.40.50.300:FF:000113">
    <property type="entry name" value="Preprotein translocase subunit SecA"/>
    <property type="match status" value="1"/>
</dbReference>
<dbReference type="FunFam" id="3.90.1440.10:FF:000001">
    <property type="entry name" value="Preprotein translocase subunit SecA"/>
    <property type="match status" value="1"/>
</dbReference>
<dbReference type="FunFam" id="1.10.3060.10:FF:000003">
    <property type="entry name" value="Protein translocase subunit SecA"/>
    <property type="match status" value="1"/>
</dbReference>
<dbReference type="FunFam" id="3.40.50.300:FF:000334">
    <property type="entry name" value="Protein translocase subunit SecA"/>
    <property type="match status" value="1"/>
</dbReference>
<dbReference type="Gene3D" id="1.10.3060.10">
    <property type="entry name" value="Helical scaffold and wing domains of SecA"/>
    <property type="match status" value="1"/>
</dbReference>
<dbReference type="Gene3D" id="3.40.50.300">
    <property type="entry name" value="P-loop containing nucleotide triphosphate hydrolases"/>
    <property type="match status" value="2"/>
</dbReference>
<dbReference type="Gene3D" id="3.90.1440.10">
    <property type="entry name" value="SecA, preprotein cross-linking domain"/>
    <property type="match status" value="1"/>
</dbReference>
<dbReference type="HAMAP" id="MF_01382">
    <property type="entry name" value="SecA"/>
    <property type="match status" value="1"/>
</dbReference>
<dbReference type="InterPro" id="IPR014001">
    <property type="entry name" value="Helicase_ATP-bd"/>
</dbReference>
<dbReference type="InterPro" id="IPR001650">
    <property type="entry name" value="Helicase_C-like"/>
</dbReference>
<dbReference type="InterPro" id="IPR027417">
    <property type="entry name" value="P-loop_NTPase"/>
</dbReference>
<dbReference type="InterPro" id="IPR004027">
    <property type="entry name" value="SEC_C_motif"/>
</dbReference>
<dbReference type="InterPro" id="IPR000185">
    <property type="entry name" value="SecA"/>
</dbReference>
<dbReference type="InterPro" id="IPR020937">
    <property type="entry name" value="SecA_CS"/>
</dbReference>
<dbReference type="InterPro" id="IPR011115">
    <property type="entry name" value="SecA_DEAD"/>
</dbReference>
<dbReference type="InterPro" id="IPR014018">
    <property type="entry name" value="SecA_motor_DEAD"/>
</dbReference>
<dbReference type="InterPro" id="IPR011130">
    <property type="entry name" value="SecA_preprotein_X-link_dom"/>
</dbReference>
<dbReference type="InterPro" id="IPR044722">
    <property type="entry name" value="SecA_SF2_C"/>
</dbReference>
<dbReference type="InterPro" id="IPR011116">
    <property type="entry name" value="SecA_Wing/Scaffold"/>
</dbReference>
<dbReference type="InterPro" id="IPR036266">
    <property type="entry name" value="SecA_Wing/Scaffold_sf"/>
</dbReference>
<dbReference type="InterPro" id="IPR036670">
    <property type="entry name" value="SecA_X-link_sf"/>
</dbReference>
<dbReference type="NCBIfam" id="NF009538">
    <property type="entry name" value="PRK12904.1"/>
    <property type="match status" value="1"/>
</dbReference>
<dbReference type="NCBIfam" id="TIGR00963">
    <property type="entry name" value="secA"/>
    <property type="match status" value="1"/>
</dbReference>
<dbReference type="PANTHER" id="PTHR30612:SF0">
    <property type="entry name" value="CHLOROPLAST PROTEIN-TRANSPORTING ATPASE"/>
    <property type="match status" value="1"/>
</dbReference>
<dbReference type="PANTHER" id="PTHR30612">
    <property type="entry name" value="SECA INNER MEMBRANE COMPONENT OF SEC PROTEIN SECRETION SYSTEM"/>
    <property type="match status" value="1"/>
</dbReference>
<dbReference type="Pfam" id="PF21090">
    <property type="entry name" value="P-loop_SecA"/>
    <property type="match status" value="1"/>
</dbReference>
<dbReference type="Pfam" id="PF02810">
    <property type="entry name" value="SEC-C"/>
    <property type="match status" value="1"/>
</dbReference>
<dbReference type="Pfam" id="PF07517">
    <property type="entry name" value="SecA_DEAD"/>
    <property type="match status" value="1"/>
</dbReference>
<dbReference type="Pfam" id="PF01043">
    <property type="entry name" value="SecA_PP_bind"/>
    <property type="match status" value="1"/>
</dbReference>
<dbReference type="Pfam" id="PF07516">
    <property type="entry name" value="SecA_SW"/>
    <property type="match status" value="1"/>
</dbReference>
<dbReference type="PRINTS" id="PR00906">
    <property type="entry name" value="SECA"/>
</dbReference>
<dbReference type="SMART" id="SM00957">
    <property type="entry name" value="SecA_DEAD"/>
    <property type="match status" value="1"/>
</dbReference>
<dbReference type="SMART" id="SM00958">
    <property type="entry name" value="SecA_PP_bind"/>
    <property type="match status" value="1"/>
</dbReference>
<dbReference type="SUPFAM" id="SSF81886">
    <property type="entry name" value="Helical scaffold and wing domains of SecA"/>
    <property type="match status" value="1"/>
</dbReference>
<dbReference type="SUPFAM" id="SSF52540">
    <property type="entry name" value="P-loop containing nucleoside triphosphate hydrolases"/>
    <property type="match status" value="2"/>
</dbReference>
<dbReference type="SUPFAM" id="SSF81767">
    <property type="entry name" value="Pre-protein crosslinking domain of SecA"/>
    <property type="match status" value="1"/>
</dbReference>
<dbReference type="PROSITE" id="PS01312">
    <property type="entry name" value="SECA"/>
    <property type="match status" value="1"/>
</dbReference>
<dbReference type="PROSITE" id="PS51196">
    <property type="entry name" value="SECA_MOTOR_DEAD"/>
    <property type="match status" value="1"/>
</dbReference>
<feature type="chain" id="PRO_0000321047" description="Protein translocase subunit SecA">
    <location>
        <begin position="1"/>
        <end position="912"/>
    </location>
</feature>
<feature type="region of interest" description="Disordered" evidence="2">
    <location>
        <begin position="865"/>
        <end position="912"/>
    </location>
</feature>
<feature type="compositionally biased region" description="Basic residues" evidence="2">
    <location>
        <begin position="902"/>
        <end position="912"/>
    </location>
</feature>
<feature type="binding site" evidence="1">
    <location>
        <position position="87"/>
    </location>
    <ligand>
        <name>ATP</name>
        <dbReference type="ChEBI" id="CHEBI:30616"/>
    </ligand>
</feature>
<feature type="binding site" evidence="1">
    <location>
        <begin position="105"/>
        <end position="109"/>
    </location>
    <ligand>
        <name>ATP</name>
        <dbReference type="ChEBI" id="CHEBI:30616"/>
    </ligand>
</feature>
<feature type="binding site" evidence="1">
    <location>
        <position position="508"/>
    </location>
    <ligand>
        <name>ATP</name>
        <dbReference type="ChEBI" id="CHEBI:30616"/>
    </ligand>
</feature>
<feature type="binding site" evidence="1">
    <location>
        <position position="896"/>
    </location>
    <ligand>
        <name>Zn(2+)</name>
        <dbReference type="ChEBI" id="CHEBI:29105"/>
    </ligand>
</feature>
<feature type="binding site" evidence="1">
    <location>
        <position position="898"/>
    </location>
    <ligand>
        <name>Zn(2+)</name>
        <dbReference type="ChEBI" id="CHEBI:29105"/>
    </ligand>
</feature>
<feature type="binding site" evidence="1">
    <location>
        <position position="907"/>
    </location>
    <ligand>
        <name>Zn(2+)</name>
        <dbReference type="ChEBI" id="CHEBI:29105"/>
    </ligand>
</feature>
<feature type="binding site" evidence="1">
    <location>
        <position position="908"/>
    </location>
    <ligand>
        <name>Zn(2+)</name>
        <dbReference type="ChEBI" id="CHEBI:29105"/>
    </ligand>
</feature>
<comment type="function">
    <text evidence="1">Part of the Sec protein translocase complex. Interacts with the SecYEG preprotein conducting channel. Has a central role in coupling the hydrolysis of ATP to the transfer of proteins into and across the cell membrane, serving both as a receptor for the preprotein-SecB complex and as an ATP-driven molecular motor driving the stepwise translocation of polypeptide chains across the membrane.</text>
</comment>
<comment type="catalytic activity">
    <reaction evidence="1">
        <text>ATP + H2O + cellular proteinSide 1 = ADP + phosphate + cellular proteinSide 2.</text>
        <dbReference type="EC" id="7.4.2.8"/>
    </reaction>
</comment>
<comment type="cofactor">
    <cofactor evidence="1">
        <name>Zn(2+)</name>
        <dbReference type="ChEBI" id="CHEBI:29105"/>
    </cofactor>
    <text evidence="1">May bind 1 zinc ion per subunit.</text>
</comment>
<comment type="subunit">
    <text evidence="1">Monomer and homodimer. Part of the essential Sec protein translocation apparatus which comprises SecA, SecYEG and auxiliary proteins SecDF-YajC and YidC.</text>
</comment>
<comment type="subcellular location">
    <subcellularLocation>
        <location evidence="1">Cell inner membrane</location>
        <topology evidence="1">Peripheral membrane protein</topology>
        <orientation evidence="1">Cytoplasmic side</orientation>
    </subcellularLocation>
    <subcellularLocation>
        <location evidence="1">Cytoplasm</location>
    </subcellularLocation>
    <text evidence="1">Distribution is 50-50.</text>
</comment>
<comment type="similarity">
    <text evidence="1">Belongs to the SecA family.</text>
</comment>
<evidence type="ECO:0000255" key="1">
    <source>
        <dbReference type="HAMAP-Rule" id="MF_01382"/>
    </source>
</evidence>
<evidence type="ECO:0000256" key="2">
    <source>
        <dbReference type="SAM" id="MobiDB-lite"/>
    </source>
</evidence>
<proteinExistence type="inferred from homology"/>
<sequence>MINSLLTRVFGSRNERQLRQLTRLVTQINALEPTIEKLSDAELQAKTPEFKQRLAAGESLDKILPEAFAVCREASRRVLGMRHYDVQLIGGMVLHLGKIAEMRTGEGKTLVATLPVYLNALQGEGVHVVTVNDYLARRDAAQMGKLYNWLGLSVGVVYPGMPHSDKREAYGSDITYGTNNEFGFDYLRDNMALSRADRYQRTLHYAIVDEVDSILIDEARTPLIISGPADESPELYIRVNRIVPQLTKQESEEGEGDFWVDEKGKQVHLSEAGMGHAEELLLQAGILENAEDGLYAAQNLSVVHHLNAALRAHAIYQRDVDYIVRDGEVVIVDEFTGRTLSGRRWSDGLHQAVEAKEGVPVQRENQTLASITFQNLFRMYKKLSGMTGTADTEAYEFQSIYGLEVVVIPTNRPTVRKDHPDQVFLNRKGKFNAVLADIEDCAKRGQPVLVGTTSIETSEMLSEHLRKAGVKHEVLNAKQHEREATIVANAGQPGAVTIATNMAGRGTDIVLGGSLESEYHALGEDATEDARFKIKTDWQRRHDAVKAAGGLHIIGTERHESRRIDNQLRGRAGRQGDPGSSRFYLSLEDNLMRIFASDWVQKAMRMMGMKEDDVIEDRLVSRQIEKAQRKVEAHNFDIRKNLLDFDDVNNDQRKVIYAQRDELLDAESVKDNVDGIRGDVIYDLVARFVPPNSVDEQWDVKGLEATLESELGVTLSLTDMVRTQEEIDAEQIAAKVQAAVDAHFAEKEAAVGNDTMRALEKHVMLTVLDQGWKEHLAKMDYLRQGIYLRGYAQKQPKQEYKKEAFELFSEMLENVKREVIHLLARVRIRSEEEVAELEEQERLHAQARLMASQFQHQDVGGYGTDEEAAQVQSGNAPVPVSQVTRDEPKVGRNDPCPCGSGKKYKHCHGQLS</sequence>
<reference key="1">
    <citation type="journal article" date="2005" name="Jpn. Agric. Res. Q.">
        <title>Genome sequence of Xanthomonas oryzae pv. oryzae suggests contribution of large numbers of effector genes and insertion sequences to its race diversity.</title>
        <authorList>
            <person name="Ochiai H."/>
            <person name="Inoue Y."/>
            <person name="Takeya M."/>
            <person name="Sasaki A."/>
            <person name="Kaku H."/>
        </authorList>
    </citation>
    <scope>NUCLEOTIDE SEQUENCE [LARGE SCALE GENOMIC DNA]</scope>
    <source>
        <strain>MAFF 311018</strain>
    </source>
</reference>
<gene>
    <name evidence="1" type="primary">secA</name>
    <name type="ordered locus">XOO3595</name>
</gene>
<protein>
    <recommendedName>
        <fullName evidence="1">Protein translocase subunit SecA</fullName>
        <ecNumber evidence="1">7.4.2.8</ecNumber>
    </recommendedName>
</protein>
<accession>Q2NZC7</accession>
<keyword id="KW-0067">ATP-binding</keyword>
<keyword id="KW-0997">Cell inner membrane</keyword>
<keyword id="KW-1003">Cell membrane</keyword>
<keyword id="KW-0963">Cytoplasm</keyword>
<keyword id="KW-0472">Membrane</keyword>
<keyword id="KW-0479">Metal-binding</keyword>
<keyword id="KW-0547">Nucleotide-binding</keyword>
<keyword id="KW-0653">Protein transport</keyword>
<keyword id="KW-1278">Translocase</keyword>
<keyword id="KW-0811">Translocation</keyword>
<keyword id="KW-0813">Transport</keyword>
<keyword id="KW-0862">Zinc</keyword>
<organism>
    <name type="scientific">Xanthomonas oryzae pv. oryzae (strain MAFF 311018)</name>
    <dbReference type="NCBI Taxonomy" id="342109"/>
    <lineage>
        <taxon>Bacteria</taxon>
        <taxon>Pseudomonadati</taxon>
        <taxon>Pseudomonadota</taxon>
        <taxon>Gammaproteobacteria</taxon>
        <taxon>Lysobacterales</taxon>
        <taxon>Lysobacteraceae</taxon>
        <taxon>Xanthomonas</taxon>
    </lineage>
</organism>
<name>SECA_XANOM</name>